<dbReference type="EMBL" id="M12732">
    <property type="protein sequence ID" value="AAA46958.1"/>
    <property type="molecule type" value="Genomic_DNA"/>
</dbReference>
<dbReference type="PIR" id="A03683">
    <property type="entry name" value="W6WL33"/>
</dbReference>
<dbReference type="SMR" id="P06427"/>
<dbReference type="IntAct" id="P06427">
    <property type="interactions" value="31"/>
</dbReference>
<dbReference type="MINT" id="P06427"/>
<dbReference type="Proteomes" id="UP000009118">
    <property type="component" value="Genome"/>
</dbReference>
<dbReference type="GO" id="GO:0030430">
    <property type="term" value="C:host cell cytoplasm"/>
    <property type="evidence" value="ECO:0007669"/>
    <property type="project" value="UniProtKB-SubCell"/>
</dbReference>
<dbReference type="GO" id="GO:0042025">
    <property type="term" value="C:host cell nucleus"/>
    <property type="evidence" value="ECO:0007669"/>
    <property type="project" value="UniProtKB-SubCell"/>
</dbReference>
<dbReference type="GO" id="GO:0003677">
    <property type="term" value="F:DNA binding"/>
    <property type="evidence" value="ECO:0007669"/>
    <property type="project" value="UniProtKB-UniRule"/>
</dbReference>
<dbReference type="GO" id="GO:0030165">
    <property type="term" value="F:PDZ domain binding"/>
    <property type="evidence" value="ECO:0007669"/>
    <property type="project" value="UniProtKB-UniRule"/>
</dbReference>
<dbReference type="GO" id="GO:0008270">
    <property type="term" value="F:zinc ion binding"/>
    <property type="evidence" value="ECO:0007669"/>
    <property type="project" value="UniProtKB-KW"/>
</dbReference>
<dbReference type="GO" id="GO:0006351">
    <property type="term" value="P:DNA-templated transcription"/>
    <property type="evidence" value="ECO:0007669"/>
    <property type="project" value="UniProtKB-UniRule"/>
</dbReference>
<dbReference type="GO" id="GO:0006355">
    <property type="term" value="P:regulation of DNA-templated transcription"/>
    <property type="evidence" value="ECO:0007669"/>
    <property type="project" value="UniProtKB-UniRule"/>
</dbReference>
<dbReference type="GO" id="GO:0052150">
    <property type="term" value="P:symbiont-mediated perturbation of host apoptosis"/>
    <property type="evidence" value="ECO:0007669"/>
    <property type="project" value="UniProtKB-KW"/>
</dbReference>
<dbReference type="GO" id="GO:0039648">
    <property type="term" value="P:symbiont-mediated perturbation of host ubiquitin-like protein modification"/>
    <property type="evidence" value="ECO:0007669"/>
    <property type="project" value="UniProtKB-UniRule"/>
</dbReference>
<dbReference type="GO" id="GO:0039548">
    <property type="term" value="P:symbiont-mediated suppression of host cytoplasmic pattern recognition receptor signaling pathway via inhibition of IRF3 activity"/>
    <property type="evidence" value="ECO:0007669"/>
    <property type="project" value="UniProtKB-UniRule"/>
</dbReference>
<dbReference type="GO" id="GO:0039502">
    <property type="term" value="P:symbiont-mediated suppression of host type I interferon-mediated signaling pathway"/>
    <property type="evidence" value="ECO:0007669"/>
    <property type="project" value="UniProtKB-UniRule"/>
</dbReference>
<dbReference type="FunFam" id="3.30.240.40:FF:000001">
    <property type="entry name" value="Protein E6"/>
    <property type="match status" value="1"/>
</dbReference>
<dbReference type="FunFam" id="3.30.240.40:FF:000002">
    <property type="entry name" value="Protein E6"/>
    <property type="match status" value="1"/>
</dbReference>
<dbReference type="Gene3D" id="3.30.240.40">
    <property type="entry name" value="E6 early regulatory protein"/>
    <property type="match status" value="2"/>
</dbReference>
<dbReference type="HAMAP" id="MF_04006">
    <property type="entry name" value="HPV_E6"/>
    <property type="match status" value="1"/>
</dbReference>
<dbReference type="InterPro" id="IPR001334">
    <property type="entry name" value="E6"/>
</dbReference>
<dbReference type="InterPro" id="IPR038575">
    <property type="entry name" value="E6_sf"/>
</dbReference>
<dbReference type="Pfam" id="PF00518">
    <property type="entry name" value="E6"/>
    <property type="match status" value="1"/>
</dbReference>
<dbReference type="SUPFAM" id="SSF161229">
    <property type="entry name" value="E6 C-terminal domain-like"/>
    <property type="match status" value="2"/>
</dbReference>
<accession>P06427</accession>
<proteinExistence type="evidence at protein level"/>
<name>VE6_HPV33</name>
<organismHost>
    <name type="scientific">Homo sapiens</name>
    <name type="common">Human</name>
    <dbReference type="NCBI Taxonomy" id="9606"/>
</organismHost>
<feature type="chain" id="PRO_0000133353" description="Protein E6">
    <location>
        <begin position="1"/>
        <end position="149"/>
    </location>
</feature>
<feature type="zinc finger region" evidence="1">
    <location>
        <begin position="30"/>
        <end position="66"/>
    </location>
</feature>
<feature type="zinc finger region" evidence="1">
    <location>
        <begin position="103"/>
        <end position="139"/>
    </location>
</feature>
<feature type="short sequence motif" description="PDZ-binding domain" evidence="1">
    <location>
        <begin position="147"/>
        <end position="149"/>
    </location>
</feature>
<organism>
    <name type="scientific">Human papillomavirus 33</name>
    <dbReference type="NCBI Taxonomy" id="10586"/>
    <lineage>
        <taxon>Viruses</taxon>
        <taxon>Monodnaviria</taxon>
        <taxon>Shotokuvirae</taxon>
        <taxon>Cossaviricota</taxon>
        <taxon>Papovaviricetes</taxon>
        <taxon>Zurhausenvirales</taxon>
        <taxon>Papillomaviridae</taxon>
        <taxon>Firstpapillomavirinae</taxon>
        <taxon>Alphapapillomavirus</taxon>
        <taxon>Alphapapillomavirus 9</taxon>
    </lineage>
</organism>
<keyword id="KW-0010">Activator</keyword>
<keyword id="KW-0238">DNA-binding</keyword>
<keyword id="KW-0244">Early protein</keyword>
<keyword id="KW-1035">Host cytoplasm</keyword>
<keyword id="KW-1048">Host nucleus</keyword>
<keyword id="KW-0945">Host-virus interaction</keyword>
<keyword id="KW-1090">Inhibition of host innate immune response by virus</keyword>
<keyword id="KW-1092">Inhibition of host IRF3 by virus</keyword>
<keyword id="KW-1113">Inhibition of host RLR pathway by virus</keyword>
<keyword id="KW-0479">Metal-binding</keyword>
<keyword id="KW-1119">Modulation of host cell apoptosis by virus</keyword>
<keyword id="KW-0553">Oncogene</keyword>
<keyword id="KW-0804">Transcription</keyword>
<keyword id="KW-0805">Transcription regulation</keyword>
<keyword id="KW-0899">Viral immunoevasion</keyword>
<keyword id="KW-0862">Zinc</keyword>
<keyword id="KW-0863">Zinc-finger</keyword>
<comment type="function">
    <text>This protein may be involved in the oncogenic potential of this virus (cervical neoplasia-associated virus).</text>
</comment>
<comment type="function">
    <text evidence="1">Plays a major role in the induction and maintenance of cellular transformation. Acts mainly as an oncoprotein by stimulating the destruction of many host cell key regulatory proteins. E6 associates with host UBE3A/E6-AP ubiquitin-protein ligase, and inactivates tumor suppressors TP53 and TP73 by targeting them to the 26S proteasome for degradation. In turn, DNA damage and chromosomal instabilities increase and lead to cell proliferation and cancer development. The complex E6/E6AP targets several other substrates to degradation via the proteasome including host DLG1 or NFX1, a repressor of human telomerase reverse transcriptase (hTERT). The resulting increased expression of hTERT prevents the shortening of telomere length leading to cell immortalization. Other cellular targets including BAK1, Fas-associated death domain-containing protein (FADD) and procaspase 8, are degraded by E6/E6AP causing inhibition of apoptosis. E6 also inhibits immune response by interacting with host IRF3 and TYK2. These interactions prevent IRF3 transcriptional activities and inhibit TYK2-mediated JAK-STAT activation by interferon alpha resulting in inhibition of the interferon signaling pathway.</text>
</comment>
<comment type="subunit">
    <text evidence="1">Forms homodimers. Interacts with ubiquitin-protein ligase UBE3A/E6-AP and thus forms a complex with human TP53. Interacts with human NFX1 and MAGI3. Interacts with human IRF3; this interaction inhibits the establishment of antiviral state. Interacts with human TYK2; this interaction inhibits JAK-STAT activation by interferon alpha. Interacts with host DLG1; this interaction leads to the proteasomal degradation of DLG1.</text>
</comment>
<comment type="interaction">
    <interactant intactId="EBI-11737184">
        <id>P06427</id>
    </interactant>
    <interactant intactId="EBI-357481">
        <id>Q12959</id>
        <label>DLG1</label>
    </interactant>
    <organismsDiffer>true</organismsDiffer>
    <experiments>3</experiments>
</comment>
<comment type="interaction">
    <interactant intactId="EBI-11737184">
        <id>P06427</id>
    </interactant>
    <interactant intactId="EBI-357345">
        <id>Q14160</id>
        <label>SCRIB</label>
    </interactant>
    <organismsDiffer>true</organismsDiffer>
    <experiments>3</experiments>
</comment>
<comment type="subcellular location">
    <subcellularLocation>
        <location evidence="1">Host cytoplasm</location>
    </subcellularLocation>
    <subcellularLocation>
        <location evidence="1">Host nucleus</location>
    </subcellularLocation>
</comment>
<comment type="miscellaneous">
    <text evidence="1">Belongs to the high risk human alphapapillomavirus family. The cancer-causing human papillomavirus E6 protein has a unique carboxy terminal PDZ domain containing substrate.</text>
</comment>
<comment type="similarity">
    <text evidence="2">Belongs to the papillomaviridae E6 protein family.</text>
</comment>
<gene>
    <name evidence="1" type="primary">E6</name>
</gene>
<reference key="1">
    <citation type="journal article" date="1986" name="J. Virol.">
        <title>Genome organization and nucleotide sequence of human papillomavirus type 33, which is associated with cervical cancer.</title>
        <authorList>
            <person name="Cole S.T."/>
            <person name="Streeck R.E."/>
        </authorList>
    </citation>
    <scope>NUCLEOTIDE SEQUENCE [GENOMIC DNA]</scope>
</reference>
<evidence type="ECO:0000255" key="1">
    <source>
        <dbReference type="HAMAP-Rule" id="MF_04006"/>
    </source>
</evidence>
<evidence type="ECO:0000305" key="2"/>
<sequence length="149" mass="17652">MFQDTEEKPRTLHDLCQALETTIHNIELQCVECKKPLQRSEVYDFAFADLTVVYREGNPFGICKLCLRFLSKISEYRHYNYSVYGNTLEQTVKKPLNEILIRCIICQRPLCPQEKKRHVDLNKRFHNISGRWAGRCAACWRSRRRETAL</sequence>
<protein>
    <recommendedName>
        <fullName evidence="1">Protein E6</fullName>
    </recommendedName>
</protein>